<organism>
    <name type="scientific">Ruegeria sp. (strain TM1040)</name>
    <name type="common">Silicibacter sp.</name>
    <dbReference type="NCBI Taxonomy" id="292414"/>
    <lineage>
        <taxon>Bacteria</taxon>
        <taxon>Pseudomonadati</taxon>
        <taxon>Pseudomonadota</taxon>
        <taxon>Alphaproteobacteria</taxon>
        <taxon>Rhodobacterales</taxon>
        <taxon>Roseobacteraceae</taxon>
        <taxon>Ruegeria</taxon>
    </lineage>
</organism>
<accession>Q1GC55</accession>
<evidence type="ECO:0000250" key="1"/>
<evidence type="ECO:0000255" key="2">
    <source>
        <dbReference type="HAMAP-Rule" id="MF_00103"/>
    </source>
</evidence>
<feature type="initiator methionine" description="Removed" evidence="1">
    <location>
        <position position="1"/>
    </location>
</feature>
<feature type="chain" id="PRO_1000008779" description="Formamidopyrimidine-DNA glycosylase">
    <location>
        <begin position="2"/>
        <end position="283"/>
    </location>
</feature>
<feature type="zinc finger region" description="FPG-type" evidence="2">
    <location>
        <begin position="247"/>
        <end position="283"/>
    </location>
</feature>
<feature type="active site" description="Schiff-base intermediate with DNA" evidence="2">
    <location>
        <position position="2"/>
    </location>
</feature>
<feature type="active site" description="Proton donor" evidence="2">
    <location>
        <position position="3"/>
    </location>
</feature>
<feature type="active site" description="Proton donor; for beta-elimination activity" evidence="2">
    <location>
        <position position="58"/>
    </location>
</feature>
<feature type="active site" description="Proton donor; for delta-elimination activity" evidence="2">
    <location>
        <position position="273"/>
    </location>
</feature>
<feature type="binding site" evidence="2">
    <location>
        <position position="100"/>
    </location>
    <ligand>
        <name>DNA</name>
        <dbReference type="ChEBI" id="CHEBI:16991"/>
    </ligand>
</feature>
<feature type="binding site" evidence="2">
    <location>
        <position position="119"/>
    </location>
    <ligand>
        <name>DNA</name>
        <dbReference type="ChEBI" id="CHEBI:16991"/>
    </ligand>
</feature>
<feature type="binding site" evidence="2">
    <location>
        <position position="162"/>
    </location>
    <ligand>
        <name>DNA</name>
        <dbReference type="ChEBI" id="CHEBI:16991"/>
    </ligand>
</feature>
<dbReference type="EC" id="3.2.2.23" evidence="2"/>
<dbReference type="EC" id="4.2.99.18" evidence="2"/>
<dbReference type="EMBL" id="CP000377">
    <property type="protein sequence ID" value="ABF65761.1"/>
    <property type="molecule type" value="Genomic_DNA"/>
</dbReference>
<dbReference type="RefSeq" id="WP_011540339.1">
    <property type="nucleotide sequence ID" value="NC_008044.1"/>
</dbReference>
<dbReference type="SMR" id="Q1GC55"/>
<dbReference type="STRING" id="292414.TM1040_3029"/>
<dbReference type="KEGG" id="sit:TM1040_3029"/>
<dbReference type="eggNOG" id="COG0266">
    <property type="taxonomic scope" value="Bacteria"/>
</dbReference>
<dbReference type="HOGENOM" id="CLU_038423_1_1_5"/>
<dbReference type="OrthoDB" id="9800855at2"/>
<dbReference type="Proteomes" id="UP000000636">
    <property type="component" value="Chromosome"/>
</dbReference>
<dbReference type="GO" id="GO:0034039">
    <property type="term" value="F:8-oxo-7,8-dihydroguanine DNA N-glycosylase activity"/>
    <property type="evidence" value="ECO:0007669"/>
    <property type="project" value="TreeGrafter"/>
</dbReference>
<dbReference type="GO" id="GO:0140078">
    <property type="term" value="F:class I DNA-(apurinic or apyrimidinic site) endonuclease activity"/>
    <property type="evidence" value="ECO:0007669"/>
    <property type="project" value="UniProtKB-EC"/>
</dbReference>
<dbReference type="GO" id="GO:0003684">
    <property type="term" value="F:damaged DNA binding"/>
    <property type="evidence" value="ECO:0007669"/>
    <property type="project" value="InterPro"/>
</dbReference>
<dbReference type="GO" id="GO:0008270">
    <property type="term" value="F:zinc ion binding"/>
    <property type="evidence" value="ECO:0007669"/>
    <property type="project" value="UniProtKB-UniRule"/>
</dbReference>
<dbReference type="GO" id="GO:0006284">
    <property type="term" value="P:base-excision repair"/>
    <property type="evidence" value="ECO:0007669"/>
    <property type="project" value="InterPro"/>
</dbReference>
<dbReference type="CDD" id="cd08966">
    <property type="entry name" value="EcFpg-like_N"/>
    <property type="match status" value="1"/>
</dbReference>
<dbReference type="FunFam" id="1.10.8.50:FF:000003">
    <property type="entry name" value="Formamidopyrimidine-DNA glycosylase"/>
    <property type="match status" value="1"/>
</dbReference>
<dbReference type="FunFam" id="3.20.190.10:FF:000001">
    <property type="entry name" value="Formamidopyrimidine-DNA glycosylase"/>
    <property type="match status" value="1"/>
</dbReference>
<dbReference type="Gene3D" id="1.10.8.50">
    <property type="match status" value="1"/>
</dbReference>
<dbReference type="Gene3D" id="3.20.190.10">
    <property type="entry name" value="MutM-like, N-terminal"/>
    <property type="match status" value="1"/>
</dbReference>
<dbReference type="HAMAP" id="MF_00103">
    <property type="entry name" value="Fapy_DNA_glycosyl"/>
    <property type="match status" value="1"/>
</dbReference>
<dbReference type="InterPro" id="IPR015886">
    <property type="entry name" value="DNA_glyclase/AP_lyase_DNA-bd"/>
</dbReference>
<dbReference type="InterPro" id="IPR020629">
    <property type="entry name" value="Formamido-pyr_DNA_Glyclase"/>
</dbReference>
<dbReference type="InterPro" id="IPR012319">
    <property type="entry name" value="FPG_cat"/>
</dbReference>
<dbReference type="InterPro" id="IPR035937">
    <property type="entry name" value="MutM-like_N-ter"/>
</dbReference>
<dbReference type="InterPro" id="IPR010979">
    <property type="entry name" value="Ribosomal_uS13-like_H2TH"/>
</dbReference>
<dbReference type="InterPro" id="IPR000214">
    <property type="entry name" value="Znf_DNA_glyclase/AP_lyase"/>
</dbReference>
<dbReference type="NCBIfam" id="TIGR00577">
    <property type="entry name" value="fpg"/>
    <property type="match status" value="1"/>
</dbReference>
<dbReference type="NCBIfam" id="NF002211">
    <property type="entry name" value="PRK01103.1"/>
    <property type="match status" value="1"/>
</dbReference>
<dbReference type="PANTHER" id="PTHR22993">
    <property type="entry name" value="FORMAMIDOPYRIMIDINE-DNA GLYCOSYLASE"/>
    <property type="match status" value="1"/>
</dbReference>
<dbReference type="PANTHER" id="PTHR22993:SF9">
    <property type="entry name" value="FORMAMIDOPYRIMIDINE-DNA GLYCOSYLASE"/>
    <property type="match status" value="1"/>
</dbReference>
<dbReference type="Pfam" id="PF01149">
    <property type="entry name" value="Fapy_DNA_glyco"/>
    <property type="match status" value="1"/>
</dbReference>
<dbReference type="Pfam" id="PF06831">
    <property type="entry name" value="H2TH"/>
    <property type="match status" value="1"/>
</dbReference>
<dbReference type="SMART" id="SM00898">
    <property type="entry name" value="Fapy_DNA_glyco"/>
    <property type="match status" value="1"/>
</dbReference>
<dbReference type="SMART" id="SM01232">
    <property type="entry name" value="H2TH"/>
    <property type="match status" value="1"/>
</dbReference>
<dbReference type="SUPFAM" id="SSF57716">
    <property type="entry name" value="Glucocorticoid receptor-like (DNA-binding domain)"/>
    <property type="match status" value="1"/>
</dbReference>
<dbReference type="SUPFAM" id="SSF81624">
    <property type="entry name" value="N-terminal domain of MutM-like DNA repair proteins"/>
    <property type="match status" value="1"/>
</dbReference>
<dbReference type="SUPFAM" id="SSF46946">
    <property type="entry name" value="S13-like H2TH domain"/>
    <property type="match status" value="1"/>
</dbReference>
<dbReference type="PROSITE" id="PS51068">
    <property type="entry name" value="FPG_CAT"/>
    <property type="match status" value="1"/>
</dbReference>
<dbReference type="PROSITE" id="PS51066">
    <property type="entry name" value="ZF_FPG_2"/>
    <property type="match status" value="1"/>
</dbReference>
<gene>
    <name evidence="2" type="primary">mutM</name>
    <name evidence="2" type="synonym">fpg</name>
    <name type="ordered locus">TM1040_3029</name>
</gene>
<name>FPG_RUEST</name>
<keyword id="KW-0227">DNA damage</keyword>
<keyword id="KW-0234">DNA repair</keyword>
<keyword id="KW-0238">DNA-binding</keyword>
<keyword id="KW-0326">Glycosidase</keyword>
<keyword id="KW-0378">Hydrolase</keyword>
<keyword id="KW-0456">Lyase</keyword>
<keyword id="KW-0479">Metal-binding</keyword>
<keyword id="KW-0511">Multifunctional enzyme</keyword>
<keyword id="KW-1185">Reference proteome</keyword>
<keyword id="KW-0862">Zinc</keyword>
<keyword id="KW-0863">Zinc-finger</keyword>
<comment type="function">
    <text evidence="2">Involved in base excision repair of DNA damaged by oxidation or by mutagenic agents. Acts as a DNA glycosylase that recognizes and removes damaged bases. Has a preference for oxidized purines, such as 7,8-dihydro-8-oxoguanine (8-oxoG). Has AP (apurinic/apyrimidinic) lyase activity and introduces nicks in the DNA strand. Cleaves the DNA backbone by beta-delta elimination to generate a single-strand break at the site of the removed base with both 3'- and 5'-phosphates.</text>
</comment>
<comment type="catalytic activity">
    <reaction evidence="2">
        <text>Hydrolysis of DNA containing ring-opened 7-methylguanine residues, releasing 2,6-diamino-4-hydroxy-5-(N-methyl)formamidopyrimidine.</text>
        <dbReference type="EC" id="3.2.2.23"/>
    </reaction>
</comment>
<comment type="catalytic activity">
    <reaction evidence="2">
        <text>2'-deoxyribonucleotide-(2'-deoxyribose 5'-phosphate)-2'-deoxyribonucleotide-DNA = a 3'-end 2'-deoxyribonucleotide-(2,3-dehydro-2,3-deoxyribose 5'-phosphate)-DNA + a 5'-end 5'-phospho-2'-deoxyribonucleoside-DNA + H(+)</text>
        <dbReference type="Rhea" id="RHEA:66592"/>
        <dbReference type="Rhea" id="RHEA-COMP:13180"/>
        <dbReference type="Rhea" id="RHEA-COMP:16897"/>
        <dbReference type="Rhea" id="RHEA-COMP:17067"/>
        <dbReference type="ChEBI" id="CHEBI:15378"/>
        <dbReference type="ChEBI" id="CHEBI:136412"/>
        <dbReference type="ChEBI" id="CHEBI:157695"/>
        <dbReference type="ChEBI" id="CHEBI:167181"/>
        <dbReference type="EC" id="4.2.99.18"/>
    </reaction>
</comment>
<comment type="cofactor">
    <cofactor evidence="2">
        <name>Zn(2+)</name>
        <dbReference type="ChEBI" id="CHEBI:29105"/>
    </cofactor>
    <text evidence="2">Binds 1 zinc ion per subunit.</text>
</comment>
<comment type="subunit">
    <text evidence="2">Monomer.</text>
</comment>
<comment type="similarity">
    <text evidence="2">Belongs to the FPG family.</text>
</comment>
<protein>
    <recommendedName>
        <fullName evidence="2">Formamidopyrimidine-DNA glycosylase</fullName>
        <shortName evidence="2">Fapy-DNA glycosylase</shortName>
        <ecNumber evidence="2">3.2.2.23</ecNumber>
    </recommendedName>
    <alternativeName>
        <fullName evidence="2">DNA-(apurinic or apyrimidinic site) lyase MutM</fullName>
        <shortName evidence="2">AP lyase MutM</shortName>
        <ecNumber evidence="2">4.2.99.18</ecNumber>
    </alternativeName>
</protein>
<reference key="1">
    <citation type="submission" date="2006-05" db="EMBL/GenBank/DDBJ databases">
        <title>Complete sequence of chromosome of Silicibacter sp. TM1040.</title>
        <authorList>
            <consortium name="US DOE Joint Genome Institute"/>
            <person name="Copeland A."/>
            <person name="Lucas S."/>
            <person name="Lapidus A."/>
            <person name="Barry K."/>
            <person name="Detter J.C."/>
            <person name="Glavina del Rio T."/>
            <person name="Hammon N."/>
            <person name="Israni S."/>
            <person name="Dalin E."/>
            <person name="Tice H."/>
            <person name="Pitluck S."/>
            <person name="Brettin T."/>
            <person name="Bruce D."/>
            <person name="Han C."/>
            <person name="Tapia R."/>
            <person name="Goodwin L."/>
            <person name="Thompson L.S."/>
            <person name="Gilna P."/>
            <person name="Schmutz J."/>
            <person name="Larimer F."/>
            <person name="Land M."/>
            <person name="Hauser L."/>
            <person name="Kyrpides N."/>
            <person name="Kim E."/>
            <person name="Belas R."/>
            <person name="Moran M.A."/>
            <person name="Buchan A."/>
            <person name="Gonzalez J.M."/>
            <person name="Schell M.A."/>
            <person name="Sun F."/>
            <person name="Richardson P."/>
        </authorList>
    </citation>
    <scope>NUCLEOTIDE SEQUENCE [LARGE SCALE GENOMIC DNA]</scope>
    <source>
        <strain>TM1040</strain>
    </source>
</reference>
<proteinExistence type="inferred from homology"/>
<sequence length="283" mass="31312">MPELPEVETVMRGLQPSMEGVVIARADVNRPDLRWPFPDRMTERLSGRRVLSMRRRSKYILADLDSGETLLVHLGMSGRMTVSGDPLGQFVHSHPQLEKHDHVVFHMDNGARVTFNDPRRFGAMDLLETAKADSHKLLAVLGPEPLGNDFHESHLVSAFKGRRTPVKSALLDQGIIAGLGNIYVCEALFRAGISPRREAGKISTSRVTSLVPIIRQVLQDAIAAGGSSLKDFRQANGELGYFQHTFDVYGREGEPCRRAGCTGTVTRITQSGRSSFYCGKCQR</sequence>